<comment type="function">
    <text evidence="1">Catalyzes the interconversion of 2-phosphoglycerate and 3-phosphoglycerate.</text>
</comment>
<comment type="catalytic activity">
    <reaction evidence="1">
        <text>(2R)-2-phosphoglycerate = (2R)-3-phosphoglycerate</text>
        <dbReference type="Rhea" id="RHEA:15901"/>
        <dbReference type="ChEBI" id="CHEBI:58272"/>
        <dbReference type="ChEBI" id="CHEBI:58289"/>
        <dbReference type="EC" id="5.4.2.12"/>
    </reaction>
</comment>
<comment type="cofactor">
    <cofactor evidence="1">
        <name>Mn(2+)</name>
        <dbReference type="ChEBI" id="CHEBI:29035"/>
    </cofactor>
    <text evidence="1">Binds 2 manganese ions per subunit.</text>
</comment>
<comment type="pathway">
    <text evidence="1">Carbohydrate degradation; glycolysis; pyruvate from D-glyceraldehyde 3-phosphate: step 3/5.</text>
</comment>
<comment type="subunit">
    <text evidence="1">Monomer.</text>
</comment>
<comment type="similarity">
    <text evidence="1">Belongs to the BPG-independent phosphoglycerate mutase family.</text>
</comment>
<feature type="chain" id="PRO_0000212188" description="2,3-bisphosphoglycerate-independent phosphoglycerate mutase">
    <location>
        <begin position="1"/>
        <end position="515"/>
    </location>
</feature>
<feature type="active site" description="Phosphoserine intermediate" evidence="1">
    <location>
        <position position="64"/>
    </location>
</feature>
<feature type="binding site" evidence="1">
    <location>
        <position position="14"/>
    </location>
    <ligand>
        <name>Mn(2+)</name>
        <dbReference type="ChEBI" id="CHEBI:29035"/>
        <label>2</label>
    </ligand>
</feature>
<feature type="binding site" evidence="1">
    <location>
        <position position="64"/>
    </location>
    <ligand>
        <name>Mn(2+)</name>
        <dbReference type="ChEBI" id="CHEBI:29035"/>
        <label>2</label>
    </ligand>
</feature>
<feature type="binding site" evidence="1">
    <location>
        <position position="125"/>
    </location>
    <ligand>
        <name>substrate</name>
    </ligand>
</feature>
<feature type="binding site" evidence="1">
    <location>
        <begin position="155"/>
        <end position="156"/>
    </location>
    <ligand>
        <name>substrate</name>
    </ligand>
</feature>
<feature type="binding site" evidence="1">
    <location>
        <position position="187"/>
    </location>
    <ligand>
        <name>substrate</name>
    </ligand>
</feature>
<feature type="binding site" evidence="1">
    <location>
        <position position="193"/>
    </location>
    <ligand>
        <name>substrate</name>
    </ligand>
</feature>
<feature type="binding site" evidence="1">
    <location>
        <begin position="263"/>
        <end position="266"/>
    </location>
    <ligand>
        <name>substrate</name>
    </ligand>
</feature>
<feature type="binding site" evidence="1">
    <location>
        <position position="337"/>
    </location>
    <ligand>
        <name>substrate</name>
    </ligand>
</feature>
<feature type="binding site" evidence="1">
    <location>
        <position position="404"/>
    </location>
    <ligand>
        <name>Mn(2+)</name>
        <dbReference type="ChEBI" id="CHEBI:29035"/>
        <label>1</label>
    </ligand>
</feature>
<feature type="binding site" evidence="1">
    <location>
        <position position="408"/>
    </location>
    <ligand>
        <name>Mn(2+)</name>
        <dbReference type="ChEBI" id="CHEBI:29035"/>
        <label>1</label>
    </ligand>
</feature>
<feature type="binding site" evidence="1">
    <location>
        <position position="445"/>
    </location>
    <ligand>
        <name>Mn(2+)</name>
        <dbReference type="ChEBI" id="CHEBI:29035"/>
        <label>2</label>
    </ligand>
</feature>
<feature type="binding site" evidence="1">
    <location>
        <position position="446"/>
    </location>
    <ligand>
        <name>Mn(2+)</name>
        <dbReference type="ChEBI" id="CHEBI:29035"/>
        <label>2</label>
    </ligand>
</feature>
<feature type="binding site" evidence="1">
    <location>
        <position position="464"/>
    </location>
    <ligand>
        <name>Mn(2+)</name>
        <dbReference type="ChEBI" id="CHEBI:29035"/>
        <label>1</label>
    </ligand>
</feature>
<keyword id="KW-0324">Glycolysis</keyword>
<keyword id="KW-0413">Isomerase</keyword>
<keyword id="KW-0464">Manganese</keyword>
<keyword id="KW-0479">Metal-binding</keyword>
<keyword id="KW-1185">Reference proteome</keyword>
<accession>Q9HU53</accession>
<sequence>MTATPKPLVLIILDGFGHSESPDYNAIYAAKKPVWDRLLATQPHGLISGSGMDVGLPDGQMGNSEVGHMNLGAGRVVYQDFTRVTKAIRDGEFFENPVIAGAVDKAVAADKAVHILGLLSPGGVHSHEDHLVAMAQMAARRGAGKIYLHAFLDGRDTPPKSAQPSLERLDATFAGLGKGRIASIIGRYFAMDRDNRWDRVQAAYELIVDGKAEFTADSSVAALEAAYARGESDEFVKATAVVPAGAEAVRVEDGDAVIFMNFRADRARELSRAFVEPAFNEFPRERAPQLAGFVMLTQYAASIPAPCAFPPEPLTNVLGEYLAKHGKTQLRIAETEKYAHVTFFFSGGREEPYEGEERILIPSPKVATYDLQPEMSAPEVTDRIVEAIEQQRYDVIVVNYANGDMVGHTGVFEAAVKAVECLDTCMGRIVEALDKVGGEALITADHGNVEQMEDESTGQAHTAHTCEPVPFVYVGKRKLSIREGGVLADVAPTMLTLMGLEQPAEMTGRSIVTLG</sequence>
<name>GPMI_PSEAE</name>
<dbReference type="EC" id="5.4.2.12" evidence="1"/>
<dbReference type="EMBL" id="AE004091">
    <property type="protein sequence ID" value="AAG08516.1"/>
    <property type="molecule type" value="Genomic_DNA"/>
</dbReference>
<dbReference type="PIR" id="G83004">
    <property type="entry name" value="G83004"/>
</dbReference>
<dbReference type="RefSeq" id="NP_253818.1">
    <property type="nucleotide sequence ID" value="NC_002516.2"/>
</dbReference>
<dbReference type="RefSeq" id="WP_003114478.1">
    <property type="nucleotide sequence ID" value="NZ_QZGE01000002.1"/>
</dbReference>
<dbReference type="SMR" id="Q9HU53"/>
<dbReference type="FunCoup" id="Q9HU53">
    <property type="interactions" value="536"/>
</dbReference>
<dbReference type="STRING" id="208964.PA5131"/>
<dbReference type="PaxDb" id="208964-PA5131"/>
<dbReference type="GeneID" id="878134"/>
<dbReference type="KEGG" id="pae:PA5131"/>
<dbReference type="PATRIC" id="fig|208964.12.peg.5377"/>
<dbReference type="PseudoCAP" id="PA5131"/>
<dbReference type="HOGENOM" id="CLU_026099_2_0_6"/>
<dbReference type="InParanoid" id="Q9HU53"/>
<dbReference type="OrthoDB" id="9800863at2"/>
<dbReference type="PhylomeDB" id="Q9HU53"/>
<dbReference type="BioCyc" id="PAER208964:G1FZ6-5246-MONOMER"/>
<dbReference type="UniPathway" id="UPA00109">
    <property type="reaction ID" value="UER00186"/>
</dbReference>
<dbReference type="Proteomes" id="UP000002438">
    <property type="component" value="Chromosome"/>
</dbReference>
<dbReference type="GO" id="GO:0005829">
    <property type="term" value="C:cytosol"/>
    <property type="evidence" value="ECO:0000318"/>
    <property type="project" value="GO_Central"/>
</dbReference>
<dbReference type="GO" id="GO:0030145">
    <property type="term" value="F:manganese ion binding"/>
    <property type="evidence" value="ECO:0000318"/>
    <property type="project" value="GO_Central"/>
</dbReference>
<dbReference type="GO" id="GO:0004619">
    <property type="term" value="F:phosphoglycerate mutase activity"/>
    <property type="evidence" value="ECO:0000318"/>
    <property type="project" value="GO_Central"/>
</dbReference>
<dbReference type="GO" id="GO:0005975">
    <property type="term" value="P:carbohydrate metabolic process"/>
    <property type="evidence" value="ECO:0000318"/>
    <property type="project" value="GO_Central"/>
</dbReference>
<dbReference type="GO" id="GO:0006007">
    <property type="term" value="P:glucose catabolic process"/>
    <property type="evidence" value="ECO:0007669"/>
    <property type="project" value="InterPro"/>
</dbReference>
<dbReference type="GO" id="GO:0006096">
    <property type="term" value="P:glycolytic process"/>
    <property type="evidence" value="ECO:0007669"/>
    <property type="project" value="UniProtKB-UniRule"/>
</dbReference>
<dbReference type="CDD" id="cd16010">
    <property type="entry name" value="iPGM"/>
    <property type="match status" value="1"/>
</dbReference>
<dbReference type="FunFam" id="3.40.1450.10:FF:000001">
    <property type="entry name" value="2,3-bisphosphoglycerate-independent phosphoglycerate mutase"/>
    <property type="match status" value="1"/>
</dbReference>
<dbReference type="FunFam" id="3.40.720.10:FF:000001">
    <property type="entry name" value="2,3-bisphosphoglycerate-independent phosphoglycerate mutase"/>
    <property type="match status" value="1"/>
</dbReference>
<dbReference type="Gene3D" id="3.40.720.10">
    <property type="entry name" value="Alkaline Phosphatase, subunit A"/>
    <property type="match status" value="1"/>
</dbReference>
<dbReference type="Gene3D" id="3.40.1450.10">
    <property type="entry name" value="BPG-independent phosphoglycerate mutase, domain B"/>
    <property type="match status" value="1"/>
</dbReference>
<dbReference type="HAMAP" id="MF_01038">
    <property type="entry name" value="GpmI"/>
    <property type="match status" value="1"/>
</dbReference>
<dbReference type="InterPro" id="IPR017850">
    <property type="entry name" value="Alkaline_phosphatase_core_sf"/>
</dbReference>
<dbReference type="InterPro" id="IPR011258">
    <property type="entry name" value="BPG-indep_PGM_N"/>
</dbReference>
<dbReference type="InterPro" id="IPR006124">
    <property type="entry name" value="Metalloenzyme"/>
</dbReference>
<dbReference type="InterPro" id="IPR036646">
    <property type="entry name" value="PGAM_B_sf"/>
</dbReference>
<dbReference type="InterPro" id="IPR005995">
    <property type="entry name" value="Pgm_bpd_ind"/>
</dbReference>
<dbReference type="NCBIfam" id="TIGR01307">
    <property type="entry name" value="pgm_bpd_ind"/>
    <property type="match status" value="1"/>
</dbReference>
<dbReference type="PANTHER" id="PTHR31637">
    <property type="entry name" value="2,3-BISPHOSPHOGLYCERATE-INDEPENDENT PHOSPHOGLYCERATE MUTASE"/>
    <property type="match status" value="1"/>
</dbReference>
<dbReference type="PANTHER" id="PTHR31637:SF0">
    <property type="entry name" value="2,3-BISPHOSPHOGLYCERATE-INDEPENDENT PHOSPHOGLYCERATE MUTASE"/>
    <property type="match status" value="1"/>
</dbReference>
<dbReference type="Pfam" id="PF06415">
    <property type="entry name" value="iPGM_N"/>
    <property type="match status" value="1"/>
</dbReference>
<dbReference type="Pfam" id="PF01676">
    <property type="entry name" value="Metalloenzyme"/>
    <property type="match status" value="1"/>
</dbReference>
<dbReference type="PIRSF" id="PIRSF001492">
    <property type="entry name" value="IPGAM"/>
    <property type="match status" value="1"/>
</dbReference>
<dbReference type="SUPFAM" id="SSF64158">
    <property type="entry name" value="2,3-Bisphosphoglycerate-independent phosphoglycerate mutase, substrate-binding domain"/>
    <property type="match status" value="1"/>
</dbReference>
<dbReference type="SUPFAM" id="SSF53649">
    <property type="entry name" value="Alkaline phosphatase-like"/>
    <property type="match status" value="1"/>
</dbReference>
<reference key="1">
    <citation type="journal article" date="2000" name="Nature">
        <title>Complete genome sequence of Pseudomonas aeruginosa PAO1, an opportunistic pathogen.</title>
        <authorList>
            <person name="Stover C.K."/>
            <person name="Pham X.-Q.T."/>
            <person name="Erwin A.L."/>
            <person name="Mizoguchi S.D."/>
            <person name="Warrener P."/>
            <person name="Hickey M.J."/>
            <person name="Brinkman F.S.L."/>
            <person name="Hufnagle W.O."/>
            <person name="Kowalik D.J."/>
            <person name="Lagrou M."/>
            <person name="Garber R.L."/>
            <person name="Goltry L."/>
            <person name="Tolentino E."/>
            <person name="Westbrock-Wadman S."/>
            <person name="Yuan Y."/>
            <person name="Brody L.L."/>
            <person name="Coulter S.N."/>
            <person name="Folger K.R."/>
            <person name="Kas A."/>
            <person name="Larbig K."/>
            <person name="Lim R.M."/>
            <person name="Smith K.A."/>
            <person name="Spencer D.H."/>
            <person name="Wong G.K.-S."/>
            <person name="Wu Z."/>
            <person name="Paulsen I.T."/>
            <person name="Reizer J."/>
            <person name="Saier M.H. Jr."/>
            <person name="Hancock R.E.W."/>
            <person name="Lory S."/>
            <person name="Olson M.V."/>
        </authorList>
    </citation>
    <scope>NUCLEOTIDE SEQUENCE [LARGE SCALE GENOMIC DNA]</scope>
    <source>
        <strain>ATCC 15692 / DSM 22644 / CIP 104116 / JCM 14847 / LMG 12228 / 1C / PRS 101 / PAO1</strain>
    </source>
</reference>
<organism>
    <name type="scientific">Pseudomonas aeruginosa (strain ATCC 15692 / DSM 22644 / CIP 104116 / JCM 14847 / LMG 12228 / 1C / PRS 101 / PAO1)</name>
    <dbReference type="NCBI Taxonomy" id="208964"/>
    <lineage>
        <taxon>Bacteria</taxon>
        <taxon>Pseudomonadati</taxon>
        <taxon>Pseudomonadota</taxon>
        <taxon>Gammaproteobacteria</taxon>
        <taxon>Pseudomonadales</taxon>
        <taxon>Pseudomonadaceae</taxon>
        <taxon>Pseudomonas</taxon>
    </lineage>
</organism>
<gene>
    <name evidence="1" type="primary">gpmI</name>
    <name type="synonym">pgm</name>
    <name type="ordered locus">PA5131</name>
</gene>
<protein>
    <recommendedName>
        <fullName evidence="1">2,3-bisphosphoglycerate-independent phosphoglycerate mutase</fullName>
        <shortName evidence="1">BPG-independent PGAM</shortName>
        <shortName evidence="1">Phosphoglyceromutase</shortName>
        <shortName evidence="1">iPGM</shortName>
        <ecNumber evidence="1">5.4.2.12</ecNumber>
    </recommendedName>
</protein>
<evidence type="ECO:0000255" key="1">
    <source>
        <dbReference type="HAMAP-Rule" id="MF_01038"/>
    </source>
</evidence>
<proteinExistence type="inferred from homology"/>